<feature type="chain" id="PRO_0000059863" description="IgW chain C region, secreted form 1/3">
    <location>
        <begin position="1" status="less than"/>
        <end position="144"/>
    </location>
</feature>
<feature type="domain" description="Ig-like" evidence="2">
    <location>
        <begin position="1" status="less than"/>
        <end position="82"/>
    </location>
</feature>
<feature type="region of interest" description="Secretory tail">
    <location>
        <begin position="87"/>
        <end position="144"/>
    </location>
</feature>
<feature type="glycosylation site" description="N-linked (GlcNAc...) asparagine" evidence="2">
    <location>
        <position position="3"/>
    </location>
</feature>
<feature type="glycosylation site" description="N-linked (GlcNAc...) asparagine" evidence="2">
    <location>
        <position position="43"/>
    </location>
</feature>
<feature type="glycosylation site" description="N-linked (GlcNAc...) asparagine" evidence="2">
    <location>
        <position position="123"/>
    </location>
</feature>
<feature type="disulfide bond" evidence="1 3">
    <location>
        <begin position="11"/>
        <end position="68"/>
    </location>
</feature>
<feature type="non-terminal residue" evidence="6">
    <location>
        <position position="1"/>
    </location>
</feature>
<protein>
    <recommendedName>
        <fullName>IgW chain C region, secreted form 1/3</fullName>
    </recommendedName>
</protein>
<name>IGW1_HETFR</name>
<accession>P83742</accession>
<accession>P83744</accession>
<reference evidence="7" key="1">
    <citation type="journal article" date="2004" name="J. Immunol.">
        <title>Unprecedented multiplicity of Ig transmembrane and secretory mRNA forms in the cartilaginous fish.</title>
        <authorList>
            <person name="Rumfelt L.L."/>
            <person name="Diaz M."/>
            <person name="Lohr R.L."/>
            <person name="Mochon E."/>
            <person name="Flajnik M.F."/>
        </authorList>
    </citation>
    <scope>NUCLEOTIDE SEQUENCE</scope>
    <source>
        <tissue evidence="4">Epigonal organ</tissue>
    </source>
</reference>
<reference evidence="7" key="2">
    <citation type="submission" date="2004-01" db="UniProtKB">
        <authorList>
            <person name="Rumfelt L.L."/>
            <person name="Diaz M."/>
            <person name="Lohr R.L."/>
            <person name="Mochon E."/>
            <person name="Flajnik M.F."/>
        </authorList>
    </citation>
    <scope>TISSUE SPECIFICITY</scope>
</reference>
<keyword id="KW-1064">Adaptive immunity</keyword>
<keyword id="KW-1015">Disulfide bond</keyword>
<keyword id="KW-0325">Glycoprotein</keyword>
<keyword id="KW-0391">Immunity</keyword>
<keyword id="KW-1280">Immunoglobulin</keyword>
<keyword id="KW-0964">Secreted</keyword>
<comment type="subcellular location">
    <subcellularLocation>
        <location evidence="6">Secreted</location>
    </subcellularLocation>
</comment>
<comment type="tissue specificity">
    <text evidence="5">Expressed mainly in lymphoid tissues including spleen, epigonal organ and circulating lymphocytes.</text>
</comment>
<dbReference type="SMR" id="P83742"/>
<dbReference type="GO" id="GO:0005576">
    <property type="term" value="C:extracellular region"/>
    <property type="evidence" value="ECO:0007669"/>
    <property type="project" value="UniProtKB-SubCell"/>
</dbReference>
<dbReference type="GO" id="GO:0019814">
    <property type="term" value="C:immunoglobulin complex"/>
    <property type="evidence" value="ECO:0007669"/>
    <property type="project" value="UniProtKB-KW"/>
</dbReference>
<dbReference type="GO" id="GO:0002250">
    <property type="term" value="P:adaptive immune response"/>
    <property type="evidence" value="ECO:0007669"/>
    <property type="project" value="UniProtKB-KW"/>
</dbReference>
<dbReference type="CDD" id="cd00098">
    <property type="entry name" value="IgC1"/>
    <property type="match status" value="1"/>
</dbReference>
<dbReference type="FunFam" id="2.60.40.10:FF:000283">
    <property type="entry name" value="Immunoglobulin kappa constant"/>
    <property type="match status" value="1"/>
</dbReference>
<dbReference type="Gene3D" id="2.60.40.10">
    <property type="entry name" value="Immunoglobulins"/>
    <property type="match status" value="1"/>
</dbReference>
<dbReference type="InterPro" id="IPR007110">
    <property type="entry name" value="Ig-like_dom"/>
</dbReference>
<dbReference type="InterPro" id="IPR036179">
    <property type="entry name" value="Ig-like_dom_sf"/>
</dbReference>
<dbReference type="InterPro" id="IPR013783">
    <property type="entry name" value="Ig-like_fold"/>
</dbReference>
<dbReference type="InterPro" id="IPR003006">
    <property type="entry name" value="Ig/MHC_CS"/>
</dbReference>
<dbReference type="InterPro" id="IPR003597">
    <property type="entry name" value="Ig_C1-set"/>
</dbReference>
<dbReference type="InterPro" id="IPR050380">
    <property type="entry name" value="Immune_Resp_Modulators"/>
</dbReference>
<dbReference type="PANTHER" id="PTHR23411">
    <property type="entry name" value="TAPASIN"/>
    <property type="match status" value="1"/>
</dbReference>
<dbReference type="Pfam" id="PF07654">
    <property type="entry name" value="C1-set"/>
    <property type="match status" value="1"/>
</dbReference>
<dbReference type="SMART" id="SM00407">
    <property type="entry name" value="IGc1"/>
    <property type="match status" value="1"/>
</dbReference>
<dbReference type="SUPFAM" id="SSF48726">
    <property type="entry name" value="Immunoglobulin"/>
    <property type="match status" value="1"/>
</dbReference>
<dbReference type="PROSITE" id="PS50835">
    <property type="entry name" value="IG_LIKE"/>
    <property type="match status" value="1"/>
</dbReference>
<dbReference type="PROSITE" id="PS00290">
    <property type="entry name" value="IG_MHC"/>
    <property type="match status" value="1"/>
</dbReference>
<sequence length="144" mass="15848">VYNQTTAVLGCVISGFYPDSVQVSWKKDRVDQSGVVLHSKQRNDSTFETVSYLTVPVVEWTTGDVYTCEVSHAGSRFNDRISMRYQKGGTINLPVPGGNTPCTCPPCSCSGCMPKLVYQTDLNVTLENGGQLQYNCHQQACKIK</sequence>
<proteinExistence type="evidence at transcript level"/>
<organism>
    <name type="scientific">Heterodontus francisci</name>
    <name type="common">Horn shark</name>
    <name type="synonym">Cestracion francisci</name>
    <dbReference type="NCBI Taxonomy" id="7792"/>
    <lineage>
        <taxon>Eukaryota</taxon>
        <taxon>Metazoa</taxon>
        <taxon>Chordata</taxon>
        <taxon>Craniata</taxon>
        <taxon>Vertebrata</taxon>
        <taxon>Chondrichthyes</taxon>
        <taxon>Elasmobranchii</taxon>
        <taxon>Galeomorphii</taxon>
        <taxon>Heterodontoidea</taxon>
        <taxon>Heterodontiformes</taxon>
        <taxon>Heterodontidae</taxon>
        <taxon>Heterodontus</taxon>
    </lineage>
</organism>
<evidence type="ECO:0000250" key="1">
    <source>
        <dbReference type="UniProtKB" id="P01842"/>
    </source>
</evidence>
<evidence type="ECO:0000255" key="2"/>
<evidence type="ECO:0000255" key="3">
    <source>
        <dbReference type="PROSITE-ProRule" id="PRU00114"/>
    </source>
</evidence>
<evidence type="ECO:0000269" key="4">
    <source>
    </source>
</evidence>
<evidence type="ECO:0000269" key="5">
    <source ref="2"/>
</evidence>
<evidence type="ECO:0000303" key="6">
    <source>
    </source>
</evidence>
<evidence type="ECO:0000305" key="7"/>